<organism>
    <name type="scientific">Corynebacterium aurimucosum (strain ATCC 700975 / DSM 44827 / CIP 107346 / CN-1)</name>
    <name type="common">Corynebacterium nigricans</name>
    <dbReference type="NCBI Taxonomy" id="548476"/>
    <lineage>
        <taxon>Bacteria</taxon>
        <taxon>Bacillati</taxon>
        <taxon>Actinomycetota</taxon>
        <taxon>Actinomycetes</taxon>
        <taxon>Mycobacteriales</taxon>
        <taxon>Corynebacteriaceae</taxon>
        <taxon>Corynebacterium</taxon>
    </lineage>
</organism>
<feature type="chain" id="PRO_1000166126" description="Large ribosomal subunit protein uL5">
    <location>
        <begin position="1"/>
        <end position="183"/>
    </location>
</feature>
<sequence>MSENYTPRLKTRYREEIKKALNEEFKYENVMQIPGVTKVVVNMGVGDAARDSKMINGALEDLTAITGQKPQVRRAKKSIANFKLREGMPIGARVTLRGDRMWEFLDRLLTIALPRIRDFRGLSDQQFDGHGNYTFGLSEQTMFYEIDIDKVDRPRGMDITVVTSATNDEEGRKLLRELGFPFK</sequence>
<gene>
    <name evidence="1" type="primary">rplE</name>
    <name type="ordered locus">cauri_0424</name>
</gene>
<comment type="function">
    <text evidence="1">This is one of the proteins that bind and probably mediate the attachment of the 5S RNA into the large ribosomal subunit, where it forms part of the central protuberance. In the 70S ribosome it contacts protein S13 of the 30S subunit (bridge B1b), connecting the 2 subunits; this bridge is implicated in subunit movement. Contacts the P site tRNA; the 5S rRNA and some of its associated proteins might help stabilize positioning of ribosome-bound tRNAs.</text>
</comment>
<comment type="subunit">
    <text evidence="1">Part of the 50S ribosomal subunit; part of the 5S rRNA/L5/L18/L25 subcomplex. Contacts the 5S rRNA and the P site tRNA. Forms a bridge to the 30S subunit in the 70S ribosome.</text>
</comment>
<comment type="similarity">
    <text evidence="1">Belongs to the universal ribosomal protein uL5 family.</text>
</comment>
<name>RL5_CORA7</name>
<evidence type="ECO:0000255" key="1">
    <source>
        <dbReference type="HAMAP-Rule" id="MF_01333"/>
    </source>
</evidence>
<evidence type="ECO:0000305" key="2"/>
<proteinExistence type="inferred from homology"/>
<protein>
    <recommendedName>
        <fullName evidence="1">Large ribosomal subunit protein uL5</fullName>
    </recommendedName>
    <alternativeName>
        <fullName evidence="2">50S ribosomal protein L5</fullName>
    </alternativeName>
</protein>
<keyword id="KW-1185">Reference proteome</keyword>
<keyword id="KW-0687">Ribonucleoprotein</keyword>
<keyword id="KW-0689">Ribosomal protein</keyword>
<keyword id="KW-0694">RNA-binding</keyword>
<keyword id="KW-0699">rRNA-binding</keyword>
<keyword id="KW-0820">tRNA-binding</keyword>
<accession>C3PL19</accession>
<reference key="1">
    <citation type="journal article" date="2010" name="BMC Genomics">
        <title>Complete genome sequence and lifestyle of black-pigmented Corynebacterium aurimucosum ATCC 700975 (formerly C. nigricans CN-1) isolated from a vaginal swab of a woman with spontaneous abortion.</title>
        <authorList>
            <person name="Trost E."/>
            <person name="Gotker S."/>
            <person name="Schneider J."/>
            <person name="Schneiker-Bekel S."/>
            <person name="Szczepanowski R."/>
            <person name="Tilker A."/>
            <person name="Viehoever P."/>
            <person name="Arnold W."/>
            <person name="Bekel T."/>
            <person name="Blom J."/>
            <person name="Gartemann K.H."/>
            <person name="Linke B."/>
            <person name="Goesmann A."/>
            <person name="Puhler A."/>
            <person name="Shukla S.K."/>
            <person name="Tauch A."/>
        </authorList>
    </citation>
    <scope>NUCLEOTIDE SEQUENCE [LARGE SCALE GENOMIC DNA]</scope>
    <source>
        <strain>ATCC 700975 / DSM 44827 / CIP 107346 / CN-1</strain>
    </source>
</reference>
<dbReference type="EMBL" id="CP001601">
    <property type="protein sequence ID" value="ACP32023.1"/>
    <property type="molecule type" value="Genomic_DNA"/>
</dbReference>
<dbReference type="RefSeq" id="WP_010189579.1">
    <property type="nucleotide sequence ID" value="NZ_ACLH01000063.1"/>
</dbReference>
<dbReference type="SMR" id="C3PL19"/>
<dbReference type="STRING" id="548476.cauri_0424"/>
<dbReference type="GeneID" id="31923041"/>
<dbReference type="KEGG" id="car:cauri_0424"/>
<dbReference type="eggNOG" id="COG0094">
    <property type="taxonomic scope" value="Bacteria"/>
</dbReference>
<dbReference type="HOGENOM" id="CLU_061015_2_1_11"/>
<dbReference type="OrthoDB" id="9806626at2"/>
<dbReference type="Proteomes" id="UP000002077">
    <property type="component" value="Chromosome"/>
</dbReference>
<dbReference type="GO" id="GO:1990904">
    <property type="term" value="C:ribonucleoprotein complex"/>
    <property type="evidence" value="ECO:0007669"/>
    <property type="project" value="UniProtKB-KW"/>
</dbReference>
<dbReference type="GO" id="GO:0005840">
    <property type="term" value="C:ribosome"/>
    <property type="evidence" value="ECO:0007669"/>
    <property type="project" value="UniProtKB-KW"/>
</dbReference>
<dbReference type="GO" id="GO:0019843">
    <property type="term" value="F:rRNA binding"/>
    <property type="evidence" value="ECO:0007669"/>
    <property type="project" value="UniProtKB-UniRule"/>
</dbReference>
<dbReference type="GO" id="GO:0003735">
    <property type="term" value="F:structural constituent of ribosome"/>
    <property type="evidence" value="ECO:0007669"/>
    <property type="project" value="InterPro"/>
</dbReference>
<dbReference type="GO" id="GO:0000049">
    <property type="term" value="F:tRNA binding"/>
    <property type="evidence" value="ECO:0007669"/>
    <property type="project" value="UniProtKB-UniRule"/>
</dbReference>
<dbReference type="GO" id="GO:0006412">
    <property type="term" value="P:translation"/>
    <property type="evidence" value="ECO:0007669"/>
    <property type="project" value="UniProtKB-UniRule"/>
</dbReference>
<dbReference type="FunFam" id="3.30.1440.10:FF:000001">
    <property type="entry name" value="50S ribosomal protein L5"/>
    <property type="match status" value="1"/>
</dbReference>
<dbReference type="Gene3D" id="3.30.1440.10">
    <property type="match status" value="1"/>
</dbReference>
<dbReference type="HAMAP" id="MF_01333_B">
    <property type="entry name" value="Ribosomal_uL5_B"/>
    <property type="match status" value="1"/>
</dbReference>
<dbReference type="InterPro" id="IPR002132">
    <property type="entry name" value="Ribosomal_uL5"/>
</dbReference>
<dbReference type="InterPro" id="IPR020930">
    <property type="entry name" value="Ribosomal_uL5_bac-type"/>
</dbReference>
<dbReference type="InterPro" id="IPR031309">
    <property type="entry name" value="Ribosomal_uL5_C"/>
</dbReference>
<dbReference type="InterPro" id="IPR022803">
    <property type="entry name" value="Ribosomal_uL5_dom_sf"/>
</dbReference>
<dbReference type="InterPro" id="IPR031310">
    <property type="entry name" value="Ribosomal_uL5_N"/>
</dbReference>
<dbReference type="NCBIfam" id="NF000585">
    <property type="entry name" value="PRK00010.1"/>
    <property type="match status" value="1"/>
</dbReference>
<dbReference type="PANTHER" id="PTHR11994">
    <property type="entry name" value="60S RIBOSOMAL PROTEIN L11-RELATED"/>
    <property type="match status" value="1"/>
</dbReference>
<dbReference type="Pfam" id="PF00281">
    <property type="entry name" value="Ribosomal_L5"/>
    <property type="match status" value="1"/>
</dbReference>
<dbReference type="Pfam" id="PF00673">
    <property type="entry name" value="Ribosomal_L5_C"/>
    <property type="match status" value="1"/>
</dbReference>
<dbReference type="PIRSF" id="PIRSF002161">
    <property type="entry name" value="Ribosomal_L5"/>
    <property type="match status" value="1"/>
</dbReference>
<dbReference type="SUPFAM" id="SSF55282">
    <property type="entry name" value="RL5-like"/>
    <property type="match status" value="1"/>
</dbReference>